<comment type="subcellular location">
    <subcellularLocation>
        <location evidence="1">Cell membrane</location>
        <topology evidence="1">Lipid-anchor</topology>
    </subcellularLocation>
</comment>
<comment type="similarity">
    <text evidence="2">Belongs to the staphylococcal tandem lipoprotein family.</text>
</comment>
<comment type="sequence caution" evidence="2">
    <conflict type="erroneous initiation">
        <sequence resource="EMBL-CDS" id="CAG41839"/>
    </conflict>
</comment>
<organism>
    <name type="scientific">Staphylococcus aureus (strain MSSA476)</name>
    <dbReference type="NCBI Taxonomy" id="282459"/>
    <lineage>
        <taxon>Bacteria</taxon>
        <taxon>Bacillati</taxon>
        <taxon>Bacillota</taxon>
        <taxon>Bacilli</taxon>
        <taxon>Bacillales</taxon>
        <taxon>Staphylococcaceae</taxon>
        <taxon>Staphylococcus</taxon>
    </lineage>
</organism>
<keyword id="KW-1003">Cell membrane</keyword>
<keyword id="KW-0449">Lipoprotein</keyword>
<keyword id="KW-0472">Membrane</keyword>
<keyword id="KW-0564">Palmitate</keyword>
<keyword id="KW-0732">Signal</keyword>
<name>Y072_STAAS</name>
<accession>Q6GD27</accession>
<feature type="signal peptide" evidence="1">
    <location>
        <begin position="1"/>
        <end position="23"/>
    </location>
</feature>
<feature type="chain" id="PRO_0000282159" description="Uncharacterized lipoprotein SAS0072">
    <location>
        <begin position="24"/>
        <end position="255"/>
    </location>
</feature>
<feature type="lipid moiety-binding region" description="N-palmitoyl cysteine" evidence="1">
    <location>
        <position position="24"/>
    </location>
</feature>
<feature type="lipid moiety-binding region" description="S-diacylglycerol cysteine" evidence="1">
    <location>
        <position position="24"/>
    </location>
</feature>
<evidence type="ECO:0000255" key="1">
    <source>
        <dbReference type="PROSITE-ProRule" id="PRU00303"/>
    </source>
</evidence>
<evidence type="ECO:0000305" key="2"/>
<proteinExistence type="inferred from homology"/>
<dbReference type="EMBL" id="BX571857">
    <property type="protein sequence ID" value="CAG41839.1"/>
    <property type="status" value="ALT_INIT"/>
    <property type="molecule type" value="Genomic_DNA"/>
</dbReference>
<dbReference type="SMR" id="Q6GD27"/>
<dbReference type="KEGG" id="sas:SAS0072"/>
<dbReference type="HOGENOM" id="CLU_071589_0_1_9"/>
<dbReference type="GO" id="GO:0005886">
    <property type="term" value="C:plasma membrane"/>
    <property type="evidence" value="ECO:0007669"/>
    <property type="project" value="UniProtKB-SubCell"/>
</dbReference>
<dbReference type="Gene3D" id="2.50.20.40">
    <property type="match status" value="1"/>
</dbReference>
<dbReference type="InterPro" id="IPR007595">
    <property type="entry name" value="Csa"/>
</dbReference>
<dbReference type="InterPro" id="IPR038641">
    <property type="entry name" value="Csa_sf"/>
</dbReference>
<dbReference type="NCBIfam" id="TIGR01742">
    <property type="entry name" value="SA_tandem_lipo"/>
    <property type="match status" value="1"/>
</dbReference>
<dbReference type="Pfam" id="PF04507">
    <property type="entry name" value="DUF576"/>
    <property type="match status" value="1"/>
</dbReference>
<dbReference type="PROSITE" id="PS51257">
    <property type="entry name" value="PROKAR_LIPOPROTEIN"/>
    <property type="match status" value="1"/>
</dbReference>
<sequence length="255" mass="29656">MKRLNKLVLGIIFLFLVISITAGCGIGKEAEVKKSFEKTLSMYPIKNLEDLYDKEGYRDDQFDKNDKGTWIINSEMVIQPNNEDMVAKGMVLYMNRNTKTTNGYYYVDVTKDEDEGKPHDNEKRYPVKMVDNKIIPTKEIKDEKIKKEIENFKFFVQYGDFKNLKNYKDGDISYNPEVPSYSAKYQLTNDDYNVKQLRKRYDIPTSKAPKLLLKGSGNLKGSSVGYKDIEFTFVEKKEENIYFSDSLDYKKSGDV</sequence>
<reference key="1">
    <citation type="journal article" date="2004" name="Proc. Natl. Acad. Sci. U.S.A.">
        <title>Complete genomes of two clinical Staphylococcus aureus strains: evidence for the rapid evolution of virulence and drug resistance.</title>
        <authorList>
            <person name="Holden M.T.G."/>
            <person name="Feil E.J."/>
            <person name="Lindsay J.A."/>
            <person name="Peacock S.J."/>
            <person name="Day N.P.J."/>
            <person name="Enright M.C."/>
            <person name="Foster T.J."/>
            <person name="Moore C.E."/>
            <person name="Hurst L."/>
            <person name="Atkin R."/>
            <person name="Barron A."/>
            <person name="Bason N."/>
            <person name="Bentley S.D."/>
            <person name="Chillingworth C."/>
            <person name="Chillingworth T."/>
            <person name="Churcher C."/>
            <person name="Clark L."/>
            <person name="Corton C."/>
            <person name="Cronin A."/>
            <person name="Doggett J."/>
            <person name="Dowd L."/>
            <person name="Feltwell T."/>
            <person name="Hance Z."/>
            <person name="Harris B."/>
            <person name="Hauser H."/>
            <person name="Holroyd S."/>
            <person name="Jagels K."/>
            <person name="James K.D."/>
            <person name="Lennard N."/>
            <person name="Line A."/>
            <person name="Mayes R."/>
            <person name="Moule S."/>
            <person name="Mungall K."/>
            <person name="Ormond D."/>
            <person name="Quail M.A."/>
            <person name="Rabbinowitsch E."/>
            <person name="Rutherford K.M."/>
            <person name="Sanders M."/>
            <person name="Sharp S."/>
            <person name="Simmonds M."/>
            <person name="Stevens K."/>
            <person name="Whitehead S."/>
            <person name="Barrell B.G."/>
            <person name="Spratt B.G."/>
            <person name="Parkhill J."/>
        </authorList>
    </citation>
    <scope>NUCLEOTIDE SEQUENCE [LARGE SCALE GENOMIC DNA]</scope>
    <source>
        <strain>MSSA476</strain>
    </source>
</reference>
<gene>
    <name type="ordered locus">SAS0072</name>
</gene>
<protein>
    <recommendedName>
        <fullName>Uncharacterized lipoprotein SAS0072</fullName>
    </recommendedName>
</protein>